<dbReference type="EMBL" id="AE017354">
    <property type="protein sequence ID" value="AAU28709.1"/>
    <property type="molecule type" value="Genomic_DNA"/>
</dbReference>
<dbReference type="RefSeq" id="WP_010948351.1">
    <property type="nucleotide sequence ID" value="NC_002942.5"/>
</dbReference>
<dbReference type="RefSeq" id="YP_096656.1">
    <property type="nucleotide sequence ID" value="NC_002942.5"/>
</dbReference>
<dbReference type="SMR" id="Q5ZS68"/>
<dbReference type="STRING" id="272624.lpg2651"/>
<dbReference type="PaxDb" id="272624-lpg2651"/>
<dbReference type="GeneID" id="57036650"/>
<dbReference type="KEGG" id="lpn:lpg2651"/>
<dbReference type="PATRIC" id="fig|272624.6.peg.2829"/>
<dbReference type="eggNOG" id="COG0261">
    <property type="taxonomic scope" value="Bacteria"/>
</dbReference>
<dbReference type="HOGENOM" id="CLU_061463_3_3_6"/>
<dbReference type="OrthoDB" id="9813334at2"/>
<dbReference type="Proteomes" id="UP000000609">
    <property type="component" value="Chromosome"/>
</dbReference>
<dbReference type="GO" id="GO:0005737">
    <property type="term" value="C:cytoplasm"/>
    <property type="evidence" value="ECO:0007669"/>
    <property type="project" value="UniProtKB-ARBA"/>
</dbReference>
<dbReference type="GO" id="GO:1990904">
    <property type="term" value="C:ribonucleoprotein complex"/>
    <property type="evidence" value="ECO:0007669"/>
    <property type="project" value="UniProtKB-KW"/>
</dbReference>
<dbReference type="GO" id="GO:0005840">
    <property type="term" value="C:ribosome"/>
    <property type="evidence" value="ECO:0007669"/>
    <property type="project" value="UniProtKB-KW"/>
</dbReference>
<dbReference type="GO" id="GO:0019843">
    <property type="term" value="F:rRNA binding"/>
    <property type="evidence" value="ECO:0007669"/>
    <property type="project" value="UniProtKB-UniRule"/>
</dbReference>
<dbReference type="GO" id="GO:0003735">
    <property type="term" value="F:structural constituent of ribosome"/>
    <property type="evidence" value="ECO:0007669"/>
    <property type="project" value="InterPro"/>
</dbReference>
<dbReference type="GO" id="GO:0006412">
    <property type="term" value="P:translation"/>
    <property type="evidence" value="ECO:0007669"/>
    <property type="project" value="UniProtKB-UniRule"/>
</dbReference>
<dbReference type="HAMAP" id="MF_01363">
    <property type="entry name" value="Ribosomal_bL21"/>
    <property type="match status" value="1"/>
</dbReference>
<dbReference type="InterPro" id="IPR028909">
    <property type="entry name" value="bL21-like"/>
</dbReference>
<dbReference type="InterPro" id="IPR036164">
    <property type="entry name" value="bL21-like_sf"/>
</dbReference>
<dbReference type="InterPro" id="IPR001787">
    <property type="entry name" value="Ribosomal_bL21"/>
</dbReference>
<dbReference type="InterPro" id="IPR018258">
    <property type="entry name" value="Ribosomal_bL21_CS"/>
</dbReference>
<dbReference type="NCBIfam" id="TIGR00061">
    <property type="entry name" value="L21"/>
    <property type="match status" value="1"/>
</dbReference>
<dbReference type="PANTHER" id="PTHR21349">
    <property type="entry name" value="50S RIBOSOMAL PROTEIN L21"/>
    <property type="match status" value="1"/>
</dbReference>
<dbReference type="PANTHER" id="PTHR21349:SF0">
    <property type="entry name" value="LARGE RIBOSOMAL SUBUNIT PROTEIN BL21M"/>
    <property type="match status" value="1"/>
</dbReference>
<dbReference type="Pfam" id="PF00829">
    <property type="entry name" value="Ribosomal_L21p"/>
    <property type="match status" value="1"/>
</dbReference>
<dbReference type="SUPFAM" id="SSF141091">
    <property type="entry name" value="L21p-like"/>
    <property type="match status" value="1"/>
</dbReference>
<dbReference type="PROSITE" id="PS01169">
    <property type="entry name" value="RIBOSOMAL_L21"/>
    <property type="match status" value="1"/>
</dbReference>
<protein>
    <recommendedName>
        <fullName evidence="1">Large ribosomal subunit protein bL21</fullName>
    </recommendedName>
    <alternativeName>
        <fullName evidence="2">50S ribosomal protein L21</fullName>
    </alternativeName>
</protein>
<keyword id="KW-1185">Reference proteome</keyword>
<keyword id="KW-0687">Ribonucleoprotein</keyword>
<keyword id="KW-0689">Ribosomal protein</keyword>
<keyword id="KW-0694">RNA-binding</keyword>
<keyword id="KW-0699">rRNA-binding</keyword>
<evidence type="ECO:0000255" key="1">
    <source>
        <dbReference type="HAMAP-Rule" id="MF_01363"/>
    </source>
</evidence>
<evidence type="ECO:0000305" key="2"/>
<proteinExistence type="inferred from homology"/>
<feature type="chain" id="PRO_0000269336" description="Large ribosomal subunit protein bL21">
    <location>
        <begin position="1"/>
        <end position="103"/>
    </location>
</feature>
<organism>
    <name type="scientific">Legionella pneumophila subsp. pneumophila (strain Philadelphia 1 / ATCC 33152 / DSM 7513)</name>
    <dbReference type="NCBI Taxonomy" id="272624"/>
    <lineage>
        <taxon>Bacteria</taxon>
        <taxon>Pseudomonadati</taxon>
        <taxon>Pseudomonadota</taxon>
        <taxon>Gammaproteobacteria</taxon>
        <taxon>Legionellales</taxon>
        <taxon>Legionellaceae</taxon>
        <taxon>Legionella</taxon>
    </lineage>
</organism>
<sequence>MYAVIKTGGKQYTVKEGDVLKIEMLPENVGNEIKFSEVLMLVDGDKVTCGTPFVAKATVKAEVLDHGRHKKVKIIKFRRRKHHMKQMGHRQYYSQVKITAIGK</sequence>
<accession>Q5ZS68</accession>
<reference key="1">
    <citation type="journal article" date="2004" name="Science">
        <title>The genomic sequence of the accidental pathogen Legionella pneumophila.</title>
        <authorList>
            <person name="Chien M."/>
            <person name="Morozova I."/>
            <person name="Shi S."/>
            <person name="Sheng H."/>
            <person name="Chen J."/>
            <person name="Gomez S.M."/>
            <person name="Asamani G."/>
            <person name="Hill K."/>
            <person name="Nuara J."/>
            <person name="Feder M."/>
            <person name="Rineer J."/>
            <person name="Greenberg J.J."/>
            <person name="Steshenko V."/>
            <person name="Park S.H."/>
            <person name="Zhao B."/>
            <person name="Teplitskaya E."/>
            <person name="Edwards J.R."/>
            <person name="Pampou S."/>
            <person name="Georghiou A."/>
            <person name="Chou I.-C."/>
            <person name="Iannuccilli W."/>
            <person name="Ulz M.E."/>
            <person name="Kim D.H."/>
            <person name="Geringer-Sameth A."/>
            <person name="Goldsberry C."/>
            <person name="Morozov P."/>
            <person name="Fischer S.G."/>
            <person name="Segal G."/>
            <person name="Qu X."/>
            <person name="Rzhetsky A."/>
            <person name="Zhang P."/>
            <person name="Cayanis E."/>
            <person name="De Jong P.J."/>
            <person name="Ju J."/>
            <person name="Kalachikov S."/>
            <person name="Shuman H.A."/>
            <person name="Russo J.J."/>
        </authorList>
    </citation>
    <scope>NUCLEOTIDE SEQUENCE [LARGE SCALE GENOMIC DNA]</scope>
    <source>
        <strain>Philadelphia 1 / ATCC 33152 / DSM 7513</strain>
    </source>
</reference>
<name>RL21_LEGPH</name>
<gene>
    <name evidence="1" type="primary">rplU</name>
    <name type="ordered locus">lpg2651</name>
</gene>
<comment type="function">
    <text evidence="1">This protein binds to 23S rRNA in the presence of protein L20.</text>
</comment>
<comment type="subunit">
    <text evidence="1">Part of the 50S ribosomal subunit. Contacts protein L20.</text>
</comment>
<comment type="similarity">
    <text evidence="1">Belongs to the bacterial ribosomal protein bL21 family.</text>
</comment>